<protein>
    <recommendedName>
        <fullName>Uncharacterized 50 kDa protein in type I retrotransposable element R1DM</fullName>
    </recommendedName>
    <alternativeName>
        <fullName>ORF 1</fullName>
    </alternativeName>
</protein>
<proteinExistence type="predicted"/>
<comment type="similarity">
    <text evidence="3">To corresponding ORF of B.mori (R1BM).</text>
</comment>
<organism>
    <name type="scientific">Drosophila melanogaster</name>
    <name type="common">Fruit fly</name>
    <dbReference type="NCBI Taxonomy" id="7227"/>
    <lineage>
        <taxon>Eukaryota</taxon>
        <taxon>Metazoa</taxon>
        <taxon>Ecdysozoa</taxon>
        <taxon>Arthropoda</taxon>
        <taxon>Hexapoda</taxon>
        <taxon>Insecta</taxon>
        <taxon>Pterygota</taxon>
        <taxon>Neoptera</taxon>
        <taxon>Endopterygota</taxon>
        <taxon>Diptera</taxon>
        <taxon>Brachycera</taxon>
        <taxon>Muscomorpha</taxon>
        <taxon>Ephydroidea</taxon>
        <taxon>Drosophilidae</taxon>
        <taxon>Drosophila</taxon>
        <taxon>Sophophora</taxon>
    </lineage>
</organism>
<keyword id="KW-0479">Metal-binding</keyword>
<keyword id="KW-0677">Repeat</keyword>
<keyword id="KW-0814">Transposable element</keyword>
<keyword id="KW-0862">Zinc</keyword>
<keyword id="KW-0863">Zinc-finger</keyword>
<dbReference type="EMBL" id="X51968">
    <property type="protein sequence ID" value="CAA36226.1"/>
    <property type="molecule type" value="Genomic_DNA"/>
</dbReference>
<dbReference type="PIR" id="S09110">
    <property type="entry name" value="S09110"/>
</dbReference>
<dbReference type="FlyBase" id="FBgn0044825">
    <property type="gene designation" value="R1A1-element\ORF1"/>
</dbReference>
<dbReference type="OrthoDB" id="6437361at2759"/>
<dbReference type="PRO" id="PR:P16424"/>
<dbReference type="GO" id="GO:0003676">
    <property type="term" value="F:nucleic acid binding"/>
    <property type="evidence" value="ECO:0007669"/>
    <property type="project" value="InterPro"/>
</dbReference>
<dbReference type="GO" id="GO:0008270">
    <property type="term" value="F:zinc ion binding"/>
    <property type="evidence" value="ECO:0007669"/>
    <property type="project" value="UniProtKB-KW"/>
</dbReference>
<dbReference type="Gene3D" id="4.10.60.10">
    <property type="entry name" value="Zinc finger, CCHC-type"/>
    <property type="match status" value="1"/>
</dbReference>
<dbReference type="InterPro" id="IPR001878">
    <property type="entry name" value="Znf_CCHC"/>
</dbReference>
<dbReference type="InterPro" id="IPR036875">
    <property type="entry name" value="Znf_CCHC_sf"/>
</dbReference>
<dbReference type="SMART" id="SM00343">
    <property type="entry name" value="ZnF_C2HC"/>
    <property type="match status" value="2"/>
</dbReference>
<dbReference type="SUPFAM" id="SSF57756">
    <property type="entry name" value="Retrovirus zinc finger-like domains"/>
    <property type="match status" value="1"/>
</dbReference>
<dbReference type="PROSITE" id="PS50158">
    <property type="entry name" value="ZF_CCHC"/>
    <property type="match status" value="1"/>
</dbReference>
<name>Y1R1_DROME</name>
<reference key="1">
    <citation type="journal article" date="1990" name="J. Mol. Biol.">
        <title>Type I (R1) and type II (R2) ribosomal DNA insertions of Drosophila melanogaster are retrotransposable elements closely related to those of Bombyx mori.</title>
        <authorList>
            <person name="Jakubczak J.L."/>
            <person name="Xiong Y."/>
            <person name="Eickbush T.H."/>
        </authorList>
    </citation>
    <scope>NUCLEOTIDE SEQUENCE [GENOMIC DNA]</scope>
    <source>
        <strain>Oregon-R</strain>
    </source>
</reference>
<gene>
    <name type="primary">R1A1-element\ORF1</name>
</gene>
<evidence type="ECO:0000255" key="1">
    <source>
        <dbReference type="PROSITE-ProRule" id="PRU00047"/>
    </source>
</evidence>
<evidence type="ECO:0000256" key="2">
    <source>
        <dbReference type="SAM" id="MobiDB-lite"/>
    </source>
</evidence>
<evidence type="ECO:0000305" key="3"/>
<accession>P16424</accession>
<feature type="chain" id="PRO_0000066075" description="Uncharacterized 50 kDa protein in type I retrotransposable element R1DM">
    <location>
        <begin position="1"/>
        <end position="471"/>
    </location>
</feature>
<feature type="zinc finger region" description="CCHC-type 1" evidence="1">
    <location>
        <begin position="397"/>
        <end position="414"/>
    </location>
</feature>
<feature type="zinc finger region" description="CCHC-type 2" evidence="1">
    <location>
        <begin position="417"/>
        <end position="434"/>
    </location>
</feature>
<feature type="region of interest" description="Disordered" evidence="2">
    <location>
        <begin position="13"/>
        <end position="57"/>
    </location>
</feature>
<feature type="region of interest" description="Gag-like cysteine motif">
    <location>
        <begin position="438"/>
        <end position="457"/>
    </location>
</feature>
<feature type="compositionally biased region" description="Low complexity" evidence="2">
    <location>
        <begin position="27"/>
        <end position="39"/>
    </location>
</feature>
<feature type="compositionally biased region" description="Basic residues" evidence="2">
    <location>
        <begin position="40"/>
        <end position="50"/>
    </location>
</feature>
<sequence length="471" mass="50380">PVSASIRLLDSSKGGATIGATPMESDSSVSALSGSSASKVSRRGRRRSHLASKSSAPTQAKLVALASNGVPEPVGVLEEAFSSLEDARAATSNAANDAAPPAAAPAVDHTVAPDVSTAAKIAATTATAATAAARAGQAAMMAELSATQRMVRNSFRSLGGVDTEELSCAISRYDELVMALMLRCGELETRLAMPPPPPPPSKANTTAANAPQMPQVAPIAAPRTTKVRETWSAVVKCDDPALSGKAIAEKVRTMVAPSLGVRVHEVRELPSRWWCDHSYSSVGELQKVMASKRFAELGLNVARNAAEKPKVIVYDVDTAIGPEEFMQELHENNFDSEMTLAQFKKSVHLVTKAWSATDGATVNVTLEVDDRAMAKLDVGRVYIKWFSFRCRSQVRTYACHRCVGFDHKVSECRQKESVCRQCGQQGHTAAKCQNPVDCRNCRHRGQPSGHYMLSNACPIYGALLARVQARH</sequence>